<gene>
    <name type="primary">omp2b</name>
</gene>
<accession>P0DI96</accession>
<accession>Q2KMJ8</accession>
<accession>Q2KMJ9</accession>
<accession>Q2KMK0</accession>
<accession>Q2KMK1</accession>
<accession>Q2KMK2</accession>
<accession>Q2KMK3</accession>
<accession>Q2KMK4</accession>
<accession>Q45428</accession>
<accession>Q7CEH8</accession>
<accession>Q9KH74</accession>
<organism>
    <name type="scientific">Brucella suis</name>
    <dbReference type="NCBI Taxonomy" id="29461"/>
    <lineage>
        <taxon>Bacteria</taxon>
        <taxon>Pseudomonadati</taxon>
        <taxon>Pseudomonadota</taxon>
        <taxon>Alphaproteobacteria</taxon>
        <taxon>Hyphomicrobiales</taxon>
        <taxon>Brucellaceae</taxon>
        <taxon>Brucella/Ochrobactrum group</taxon>
        <taxon>Brucella</taxon>
    </lineage>
</organism>
<keyword id="KW-0998">Cell outer membrane</keyword>
<keyword id="KW-0406">Ion transport</keyword>
<keyword id="KW-0472">Membrane</keyword>
<keyword id="KW-0626">Porin</keyword>
<keyword id="KW-0732">Signal</keyword>
<keyword id="KW-0812">Transmembrane</keyword>
<keyword id="KW-1134">Transmembrane beta strand</keyword>
<keyword id="KW-0813">Transport</keyword>
<feature type="signal peptide" evidence="2">
    <location>
        <begin position="1"/>
        <end position="22"/>
    </location>
</feature>
<feature type="chain" id="PRO_0000412629" description="Porin Omp2b">
    <location>
        <begin position="23"/>
        <end position="375"/>
    </location>
</feature>
<feature type="sequence variant" description="In strain: Fr7.">
    <original>VH</original>
    <variation>IS</variation>
    <location>
        <begin position="59"/>
        <end position="60"/>
    </location>
</feature>
<feature type="sequence variant" description="In strain: 686, De12, Fr7, Pt1 and Thomsen.">
    <original>SGT</original>
    <variation>TGS</variation>
    <location>
        <begin position="75"/>
        <end position="77"/>
    </location>
</feature>
<feature type="sequence variant" description="In strain: Fr11 and Wf21.">
    <original>K</original>
    <variation>N</variation>
    <location>
        <position position="80"/>
    </location>
</feature>
<feature type="sequence variant" description="In strain: De12, Fr7, Pt1 and Thomsen.">
    <original>S</original>
    <variation>G</variation>
    <location>
        <position position="85"/>
    </location>
</feature>
<feature type="sequence variant" description="In strain: De12, Fr7, Pt1 and Thomsen.">
    <original>RVSTG</original>
    <variation>MFNTN</variation>
    <location>
        <begin position="91"/>
        <end position="95"/>
    </location>
</feature>
<feature type="sequence variant" description="In strain: 686, De12, Fr7, Fr11, Pt1, Thomsen and Wf21.">
    <original>SASNSREDGYYGTNSD</original>
    <variation>AANNSGVDGKYGNETSS</variation>
    <location>
        <begin position="114"/>
        <end position="129"/>
    </location>
</feature>
<feature type="sequence variant" description="In strain: 686, De12, Fr7, Fr11, Pt1, Thomsen and Wf21.">
    <original>Q</original>
    <variation>E</variation>
    <location>
        <position position="134"/>
    </location>
</feature>
<feature type="sequence variant" description="In strain: 686, De12, Fr7, Fr11, Pt1, Thomsen and Wf21.">
    <original>Q</original>
    <variation>H</variation>
    <location>
        <position position="153"/>
    </location>
</feature>
<feature type="sequence variant" description="In strain: 686, De12, Fr7, Fr11, Pt1, Thomsen and Wf21.">
    <original>T</original>
    <variation>S</variation>
    <location>
        <position position="172"/>
    </location>
</feature>
<feature type="sequence variant" description="In strain: 686, De12, Fr7, Fr11, Pt1, Thomsen and Wf21.">
    <original>PVFKDSQGREINGRGYQ</original>
    <variation>GTTNYH</variation>
    <location>
        <begin position="206"/>
        <end position="222"/>
    </location>
</feature>
<feature type="sequence variant" description="In strain: 686, De12, Fr7, Fr11, Pt1, Thomsen and Wf21.">
    <original>T</original>
    <variation>A</variation>
    <location>
        <position position="258"/>
    </location>
</feature>
<feature type="sequence variant" description="In strain: 686, De12, Fr7, Fr11, Pt1, Thomsen and Wf21.">
    <original>I</original>
    <variation>V</variation>
    <location>
        <position position="339"/>
    </location>
</feature>
<feature type="sequence variant" description="In strain: 686, De12, Fr7, Fr11, Pt1, Thomsen and Wf21.">
    <original>SN</original>
    <variation>GG</variation>
    <location>
        <begin position="349"/>
        <end position="350"/>
    </location>
</feature>
<feature type="sequence variant" description="In strain: 686, De12, Fr7, Fr11, Pt1, Thomsen and Wf21.">
    <original>RELGNDTLDD</original>
    <variation>NTVAEDN</variation>
    <location>
        <begin position="354"/>
        <end position="363"/>
    </location>
</feature>
<protein>
    <recommendedName>
        <fullName>Porin Omp2b</fullName>
    </recommendedName>
</protein>
<proteinExistence type="evidence at protein level"/>
<sequence length="375" mass="40569">MNIKSLLLGSAAALVAASGAQAADAIVAPEPEAVEYVRVCDAYGAGYFYIPGTETCLRVHGYVRYDVKGGDDVYSGTDRKGWDKSARFALRVSTGSETELGTLKTFTELRFNYSASNSREDGYYGTNSDGTVMQFAYIQLGGLRVGIDESEFQTFTGYLGDVINDDVISAGTYRTGKISYTFTGGNGFSAVIALEQGGDNDGGYTPVFKDSQGREINGRGYQIDGYMPDVVGGLKYAGGWGSIAGVVAYDSVIEEWATKVRGDVNITDQFSVWLQGAYSSAATPDQNYGQWGGDWAVWGGLKYQATQKAAFNLQAAHDDWGKTAVTANVAYELVPGFTITPEVSYTKFSNEWKRELGNDTLDDAWGGIVRFQRSF</sequence>
<reference key="1">
    <citation type="journal article" date="2001" name="J. Bacteriol.">
        <title>Molecular, antigenic, and functional analyses of Omp2b porin size variants of Brucella spp.</title>
        <authorList>
            <person name="Paquet J.-Y."/>
            <person name="Diaz M.A."/>
            <person name="Genevrois S."/>
            <person name="Grayon M."/>
            <person name="Verger J.-M."/>
            <person name="de Bolle X."/>
            <person name="Lakey J.H."/>
            <person name="Letesson J.-J."/>
            <person name="Cloeckaert A."/>
        </authorList>
    </citation>
    <scope>NUCLEOTIDE SEQUENCE [GENOMIC DNA]</scope>
    <scope>FUNCTION IN PERMEABILITY TO SUGAR</scope>
    <source>
        <strain>83-210</strain>
    </source>
</reference>
<reference key="2">
    <citation type="journal article" date="2006" name="Vet. Microbiol.">
        <title>Development of a multiplex PCR assay for polymorphism analysis of Brucella suis biovars causing brucellosis in swine.</title>
        <authorList>
            <person name="Ferrao-Beck L."/>
            <person name="Cardoso R."/>
            <person name="Munoz P.M."/>
            <person name="de Miguel M.J."/>
            <person name="Albert D."/>
            <person name="Ferreira A.C."/>
            <person name="Marin C.M."/>
            <person name="Thiebaud M."/>
            <person name="Jacques I."/>
            <person name="Grayon M."/>
            <person name="Zygmunt M.S."/>
            <person name="Garin-Bastuji B."/>
            <person name="Blasco J.M."/>
            <person name="Sa M.I."/>
        </authorList>
    </citation>
    <scope>NUCLEOTIDE SEQUENCE [GENOMIC DNA] OF 2-375</scope>
    <source>
        <strain>686</strain>
        <strain>De12</strain>
        <strain>Fr11</strain>
        <strain>Fr7</strain>
        <strain>Pt1</strain>
        <strain>Thomsen</strain>
        <strain>Wf21</strain>
    </source>
</reference>
<name>OMP2B_BRUSS</name>
<dbReference type="EMBL" id="AF268034">
    <property type="protein sequence ID" value="AAF80105.1"/>
    <property type="molecule type" value="Genomic_DNA"/>
</dbReference>
<dbReference type="EMBL" id="AY903259">
    <property type="protein sequence ID" value="AAX83995.1"/>
    <property type="molecule type" value="Genomic_DNA"/>
</dbReference>
<dbReference type="EMBL" id="AY903260">
    <property type="protein sequence ID" value="AAX83996.1"/>
    <property type="molecule type" value="Genomic_DNA"/>
</dbReference>
<dbReference type="EMBL" id="AY903261">
    <property type="protein sequence ID" value="AAX83997.1"/>
    <property type="molecule type" value="Genomic_DNA"/>
</dbReference>
<dbReference type="EMBL" id="AY903262">
    <property type="protein sequence ID" value="AAX83998.1"/>
    <property type="molecule type" value="Genomic_DNA"/>
</dbReference>
<dbReference type="EMBL" id="AY903263">
    <property type="protein sequence ID" value="AAX83999.1"/>
    <property type="molecule type" value="Genomic_DNA"/>
</dbReference>
<dbReference type="EMBL" id="AY903264">
    <property type="protein sequence ID" value="AAX84000.1"/>
    <property type="molecule type" value="Genomic_DNA"/>
</dbReference>
<dbReference type="EMBL" id="AY903265">
    <property type="protein sequence ID" value="AAX84001.1"/>
    <property type="molecule type" value="Genomic_DNA"/>
</dbReference>
<dbReference type="GO" id="GO:0009279">
    <property type="term" value="C:cell outer membrane"/>
    <property type="evidence" value="ECO:0007669"/>
    <property type="project" value="UniProtKB-SubCell"/>
</dbReference>
<dbReference type="GO" id="GO:0046930">
    <property type="term" value="C:pore complex"/>
    <property type="evidence" value="ECO:0007669"/>
    <property type="project" value="UniProtKB-KW"/>
</dbReference>
<dbReference type="GO" id="GO:0015288">
    <property type="term" value="F:porin activity"/>
    <property type="evidence" value="ECO:0007669"/>
    <property type="project" value="UniProtKB-KW"/>
</dbReference>
<dbReference type="GO" id="GO:0006811">
    <property type="term" value="P:monoatomic ion transport"/>
    <property type="evidence" value="ECO:0007669"/>
    <property type="project" value="UniProtKB-KW"/>
</dbReference>
<dbReference type="InterPro" id="IPR003684">
    <property type="entry name" value="Porin_alphabac"/>
</dbReference>
<dbReference type="Pfam" id="PF02530">
    <property type="entry name" value="Porin_2"/>
    <property type="match status" value="1"/>
</dbReference>
<dbReference type="SUPFAM" id="SSF56935">
    <property type="entry name" value="Porins"/>
    <property type="match status" value="1"/>
</dbReference>
<comment type="function">
    <text evidence="3">Forms passive diffusion pores that allow small molecular weight hydrophilic materials across the outer membrane.</text>
</comment>
<comment type="subunit">
    <text evidence="1">Homotrimer.</text>
</comment>
<comment type="subcellular location">
    <subcellularLocation>
        <location evidence="1">Cell outer membrane</location>
        <topology evidence="1">Multi-pass membrane protein</topology>
    </subcellularLocation>
</comment>
<comment type="domain">
    <text evidence="1">Consists of 16-stranded beta-barrel sheets, with large surface-exposed loops, that form a transmembrane pore at the center of each barrel. The pore is partially ocluded by a peptide loop that folds into the pore lumen.</text>
</comment>
<comment type="miscellaneous">
    <text evidence="1">The pore formed by Omp2a is larger than the one formed by Omp2b. Omp2b pores have optimal permeability to allow growth and protection against harmful compounds. The larger pore formed by Omp2a may be advantageous for intracellular growth, when the bacterium is competing with the host cell for nutrients whose concentration is particularly low within the phagosome.</text>
</comment>
<comment type="similarity">
    <text evidence="4">Belongs to the alphaproteobacteria porin family.</text>
</comment>
<evidence type="ECO:0000250" key="1">
    <source>
        <dbReference type="UniProtKB" id="Q44665"/>
    </source>
</evidence>
<evidence type="ECO:0000255" key="2"/>
<evidence type="ECO:0000269" key="3">
    <source>
    </source>
</evidence>
<evidence type="ECO:0000305" key="4"/>